<proteinExistence type="inferred from homology"/>
<comment type="function">
    <text evidence="1">NDH-1 shuttles electrons from NADH, via FMN and iron-sulfur (Fe-S) centers, to quinones in the respiratory chain. The immediate electron acceptor for the enzyme in this species is believed to be ubiquinone. Couples the redox reaction to proton translocation (for every two electrons transferred, four hydrogen ions are translocated across the cytoplasmic membrane), and thus conserves the redox energy in a proton gradient.</text>
</comment>
<comment type="catalytic activity">
    <reaction evidence="1">
        <text>a quinone + NADH + 5 H(+)(in) = a quinol + NAD(+) + 4 H(+)(out)</text>
        <dbReference type="Rhea" id="RHEA:57888"/>
        <dbReference type="ChEBI" id="CHEBI:15378"/>
        <dbReference type="ChEBI" id="CHEBI:24646"/>
        <dbReference type="ChEBI" id="CHEBI:57540"/>
        <dbReference type="ChEBI" id="CHEBI:57945"/>
        <dbReference type="ChEBI" id="CHEBI:132124"/>
    </reaction>
</comment>
<comment type="cofactor">
    <cofactor evidence="1">
        <name>[4Fe-4S] cluster</name>
        <dbReference type="ChEBI" id="CHEBI:49883"/>
    </cofactor>
    <text evidence="1">Binds 1 [4Fe-4S] cluster.</text>
</comment>
<comment type="subunit">
    <text evidence="1">NDH-1 is composed of 13 different subunits. Subunits NuoB, CD, E, F, and G constitute the peripheral sector of the complex.</text>
</comment>
<comment type="subcellular location">
    <subcellularLocation>
        <location evidence="1">Cell inner membrane</location>
        <topology evidence="1">Peripheral membrane protein</topology>
        <orientation evidence="1">Cytoplasmic side</orientation>
    </subcellularLocation>
</comment>
<comment type="similarity">
    <text evidence="1">Belongs to the complex I 20 kDa subunit family.</text>
</comment>
<reference key="1">
    <citation type="submission" date="2008-02" db="EMBL/GenBank/DDBJ databases">
        <title>Complete sequence of Escherichia coli C str. ATCC 8739.</title>
        <authorList>
            <person name="Copeland A."/>
            <person name="Lucas S."/>
            <person name="Lapidus A."/>
            <person name="Glavina del Rio T."/>
            <person name="Dalin E."/>
            <person name="Tice H."/>
            <person name="Bruce D."/>
            <person name="Goodwin L."/>
            <person name="Pitluck S."/>
            <person name="Kiss H."/>
            <person name="Brettin T."/>
            <person name="Detter J.C."/>
            <person name="Han C."/>
            <person name="Kuske C.R."/>
            <person name="Schmutz J."/>
            <person name="Larimer F."/>
            <person name="Land M."/>
            <person name="Hauser L."/>
            <person name="Kyrpides N."/>
            <person name="Mikhailova N."/>
            <person name="Ingram L."/>
            <person name="Richardson P."/>
        </authorList>
    </citation>
    <scope>NUCLEOTIDE SEQUENCE [LARGE SCALE GENOMIC DNA]</scope>
    <source>
        <strain>ATCC 8739 / DSM 1576 / NBRC 3972 / NCIMB 8545 / WDCM 00012 / Crooks</strain>
    </source>
</reference>
<dbReference type="EC" id="7.1.1.-" evidence="1"/>
<dbReference type="EMBL" id="CP000946">
    <property type="protein sequence ID" value="ACA77031.1"/>
    <property type="molecule type" value="Genomic_DNA"/>
</dbReference>
<dbReference type="RefSeq" id="WP_000386733.1">
    <property type="nucleotide sequence ID" value="NZ_MTFT01000028.1"/>
</dbReference>
<dbReference type="SMR" id="B1IXQ5"/>
<dbReference type="GeneID" id="93774887"/>
<dbReference type="KEGG" id="ecl:EcolC_1365"/>
<dbReference type="HOGENOM" id="CLU_055737_7_3_6"/>
<dbReference type="GO" id="GO:0005886">
    <property type="term" value="C:plasma membrane"/>
    <property type="evidence" value="ECO:0007669"/>
    <property type="project" value="UniProtKB-SubCell"/>
</dbReference>
<dbReference type="GO" id="GO:0045271">
    <property type="term" value="C:respiratory chain complex I"/>
    <property type="evidence" value="ECO:0007669"/>
    <property type="project" value="TreeGrafter"/>
</dbReference>
<dbReference type="GO" id="GO:0051539">
    <property type="term" value="F:4 iron, 4 sulfur cluster binding"/>
    <property type="evidence" value="ECO:0007669"/>
    <property type="project" value="UniProtKB-KW"/>
</dbReference>
<dbReference type="GO" id="GO:0005506">
    <property type="term" value="F:iron ion binding"/>
    <property type="evidence" value="ECO:0007669"/>
    <property type="project" value="UniProtKB-UniRule"/>
</dbReference>
<dbReference type="GO" id="GO:0008137">
    <property type="term" value="F:NADH dehydrogenase (ubiquinone) activity"/>
    <property type="evidence" value="ECO:0007669"/>
    <property type="project" value="InterPro"/>
</dbReference>
<dbReference type="GO" id="GO:0050136">
    <property type="term" value="F:NADH:ubiquinone reductase (non-electrogenic) activity"/>
    <property type="evidence" value="ECO:0007669"/>
    <property type="project" value="UniProtKB-UniRule"/>
</dbReference>
<dbReference type="GO" id="GO:0048038">
    <property type="term" value="F:quinone binding"/>
    <property type="evidence" value="ECO:0007669"/>
    <property type="project" value="UniProtKB-KW"/>
</dbReference>
<dbReference type="GO" id="GO:0009060">
    <property type="term" value="P:aerobic respiration"/>
    <property type="evidence" value="ECO:0007669"/>
    <property type="project" value="TreeGrafter"/>
</dbReference>
<dbReference type="GO" id="GO:0015990">
    <property type="term" value="P:electron transport coupled proton transport"/>
    <property type="evidence" value="ECO:0007669"/>
    <property type="project" value="TreeGrafter"/>
</dbReference>
<dbReference type="FunFam" id="3.40.50.12280:FF:000002">
    <property type="entry name" value="NADH-quinone oxidoreductase subunit B"/>
    <property type="match status" value="1"/>
</dbReference>
<dbReference type="Gene3D" id="3.40.50.12280">
    <property type="match status" value="1"/>
</dbReference>
<dbReference type="HAMAP" id="MF_01356">
    <property type="entry name" value="NDH1_NuoB"/>
    <property type="match status" value="1"/>
</dbReference>
<dbReference type="InterPro" id="IPR006137">
    <property type="entry name" value="NADH_UbQ_OxRdtase-like_20kDa"/>
</dbReference>
<dbReference type="InterPro" id="IPR006138">
    <property type="entry name" value="NADH_UQ_OxRdtase_20Kd_su"/>
</dbReference>
<dbReference type="NCBIfam" id="TIGR01957">
    <property type="entry name" value="nuoB_fam"/>
    <property type="match status" value="1"/>
</dbReference>
<dbReference type="NCBIfam" id="NF005012">
    <property type="entry name" value="PRK06411.1"/>
    <property type="match status" value="1"/>
</dbReference>
<dbReference type="PANTHER" id="PTHR11995">
    <property type="entry name" value="NADH DEHYDROGENASE"/>
    <property type="match status" value="1"/>
</dbReference>
<dbReference type="PANTHER" id="PTHR11995:SF14">
    <property type="entry name" value="NADH DEHYDROGENASE [UBIQUINONE] IRON-SULFUR PROTEIN 7, MITOCHONDRIAL"/>
    <property type="match status" value="1"/>
</dbReference>
<dbReference type="Pfam" id="PF01058">
    <property type="entry name" value="Oxidored_q6"/>
    <property type="match status" value="1"/>
</dbReference>
<dbReference type="SUPFAM" id="SSF56770">
    <property type="entry name" value="HydA/Nqo6-like"/>
    <property type="match status" value="1"/>
</dbReference>
<dbReference type="PROSITE" id="PS01150">
    <property type="entry name" value="COMPLEX1_20K"/>
    <property type="match status" value="1"/>
</dbReference>
<name>NUOB_ECOLC</name>
<evidence type="ECO:0000255" key="1">
    <source>
        <dbReference type="HAMAP-Rule" id="MF_01356"/>
    </source>
</evidence>
<accession>B1IXQ5</accession>
<protein>
    <recommendedName>
        <fullName evidence="1">NADH-quinone oxidoreductase subunit B</fullName>
        <ecNumber evidence="1">7.1.1.-</ecNumber>
    </recommendedName>
    <alternativeName>
        <fullName evidence="1">NADH dehydrogenase I subunit B</fullName>
    </alternativeName>
    <alternativeName>
        <fullName evidence="1">NDH-1 subunit B</fullName>
    </alternativeName>
</protein>
<organism>
    <name type="scientific">Escherichia coli (strain ATCC 8739 / DSM 1576 / NBRC 3972 / NCIMB 8545 / WDCM 00012 / Crooks)</name>
    <dbReference type="NCBI Taxonomy" id="481805"/>
    <lineage>
        <taxon>Bacteria</taxon>
        <taxon>Pseudomonadati</taxon>
        <taxon>Pseudomonadota</taxon>
        <taxon>Gammaproteobacteria</taxon>
        <taxon>Enterobacterales</taxon>
        <taxon>Enterobacteriaceae</taxon>
        <taxon>Escherichia</taxon>
    </lineage>
</organism>
<gene>
    <name evidence="1" type="primary">nuoB</name>
    <name type="ordered locus">EcolC_1365</name>
</gene>
<feature type="chain" id="PRO_0000376207" description="NADH-quinone oxidoreductase subunit B">
    <location>
        <begin position="1"/>
        <end position="220"/>
    </location>
</feature>
<feature type="binding site" evidence="1">
    <location>
        <position position="63"/>
    </location>
    <ligand>
        <name>[4Fe-4S] cluster</name>
        <dbReference type="ChEBI" id="CHEBI:49883"/>
    </ligand>
</feature>
<feature type="binding site" evidence="1">
    <location>
        <position position="64"/>
    </location>
    <ligand>
        <name>[4Fe-4S] cluster</name>
        <dbReference type="ChEBI" id="CHEBI:49883"/>
    </ligand>
</feature>
<feature type="binding site" evidence="1">
    <location>
        <position position="129"/>
    </location>
    <ligand>
        <name>[4Fe-4S] cluster</name>
        <dbReference type="ChEBI" id="CHEBI:49883"/>
    </ligand>
</feature>
<feature type="binding site" evidence="1">
    <location>
        <position position="158"/>
    </location>
    <ligand>
        <name>[4Fe-4S] cluster</name>
        <dbReference type="ChEBI" id="CHEBI:49883"/>
    </ligand>
</feature>
<sequence length="220" mass="25056">MDYTLTRIDPNGENDRYPLQKQEIVTDPLEQEVNKNVFMGKLNDMVNWGRKNSIWPYNFGLSCCYVEMVTSFTAVHDVARFGAEVLRASPRQADLMVVAGTCFTKMAPVIQRLYDQMLEPKWVISMGACANSGGMYDIYSVVQGVDKFIPVDVYIPGCPPRPEAYMQALMLLQESIGKERRPLSWVVGDQGVYRANMQSERERKRGERIAVTNLRTPDEI</sequence>
<keyword id="KW-0004">4Fe-4S</keyword>
<keyword id="KW-0997">Cell inner membrane</keyword>
<keyword id="KW-1003">Cell membrane</keyword>
<keyword id="KW-0408">Iron</keyword>
<keyword id="KW-0411">Iron-sulfur</keyword>
<keyword id="KW-0472">Membrane</keyword>
<keyword id="KW-0479">Metal-binding</keyword>
<keyword id="KW-0520">NAD</keyword>
<keyword id="KW-0874">Quinone</keyword>
<keyword id="KW-1278">Translocase</keyword>
<keyword id="KW-0813">Transport</keyword>
<keyword id="KW-0830">Ubiquinone</keyword>